<proteinExistence type="inferred from homology"/>
<comment type="function">
    <text evidence="1">Core subunit of the mitochondrial membrane respiratory chain NADH dehydrogenase (Complex I) that is believed to belong to the minimal assembly required for catalysis. Complex I functions in the transfer of electrons from NADH to the respiratory chain. The immediate electron acceptor for the enzyme is believed to be ubiquinone (By similarity).</text>
</comment>
<comment type="catalytic activity">
    <reaction>
        <text>a ubiquinone + NADH + 5 H(+)(in) = a ubiquinol + NAD(+) + 4 H(+)(out)</text>
        <dbReference type="Rhea" id="RHEA:29091"/>
        <dbReference type="Rhea" id="RHEA-COMP:9565"/>
        <dbReference type="Rhea" id="RHEA-COMP:9566"/>
        <dbReference type="ChEBI" id="CHEBI:15378"/>
        <dbReference type="ChEBI" id="CHEBI:16389"/>
        <dbReference type="ChEBI" id="CHEBI:17976"/>
        <dbReference type="ChEBI" id="CHEBI:57540"/>
        <dbReference type="ChEBI" id="CHEBI:57945"/>
        <dbReference type="EC" id="7.1.1.2"/>
    </reaction>
</comment>
<comment type="subcellular location">
    <subcellularLocation>
        <location evidence="1">Mitochondrion membrane</location>
        <topology evidence="1">Multi-pass membrane protein</topology>
    </subcellularLocation>
</comment>
<comment type="similarity">
    <text evidence="3">Belongs to the complex I subunit 4 family.</text>
</comment>
<organism>
    <name type="scientific">Macaca fascicularis</name>
    <name type="common">Crab-eating macaque</name>
    <name type="synonym">Cynomolgus monkey</name>
    <dbReference type="NCBI Taxonomy" id="9541"/>
    <lineage>
        <taxon>Eukaryota</taxon>
        <taxon>Metazoa</taxon>
        <taxon>Chordata</taxon>
        <taxon>Craniata</taxon>
        <taxon>Vertebrata</taxon>
        <taxon>Euteleostomi</taxon>
        <taxon>Mammalia</taxon>
        <taxon>Eutheria</taxon>
        <taxon>Euarchontoglires</taxon>
        <taxon>Primates</taxon>
        <taxon>Haplorrhini</taxon>
        <taxon>Catarrhini</taxon>
        <taxon>Cercopithecidae</taxon>
        <taxon>Cercopithecinae</taxon>
        <taxon>Macaca</taxon>
    </lineage>
</organism>
<keyword id="KW-0249">Electron transport</keyword>
<keyword id="KW-0472">Membrane</keyword>
<keyword id="KW-0496">Mitochondrion</keyword>
<keyword id="KW-0520">NAD</keyword>
<keyword id="KW-1185">Reference proteome</keyword>
<keyword id="KW-0679">Respiratory chain</keyword>
<keyword id="KW-1278">Translocase</keyword>
<keyword id="KW-0812">Transmembrane</keyword>
<keyword id="KW-1133">Transmembrane helix</keyword>
<keyword id="KW-0813">Transport</keyword>
<keyword id="KW-0830">Ubiquinone</keyword>
<gene>
    <name type="primary">MT-ND4</name>
    <name type="synonym">MTND4</name>
    <name type="synonym">NADH4</name>
    <name type="synonym">ND4</name>
</gene>
<dbReference type="EC" id="7.1.1.2"/>
<dbReference type="EMBL" id="M22653">
    <property type="protein sequence ID" value="AAA69757.1"/>
    <property type="molecule type" value="Genomic_DNA"/>
</dbReference>
<dbReference type="EMBL" id="D85275">
    <property type="protein sequence ID" value="BAA12761.1"/>
    <property type="molecule type" value="Genomic_DNA"/>
</dbReference>
<dbReference type="PIR" id="I77325">
    <property type="entry name" value="I77325"/>
</dbReference>
<dbReference type="SMR" id="P50664"/>
<dbReference type="STRING" id="9541.ENSMFAP00000046145"/>
<dbReference type="Proteomes" id="UP000233100">
    <property type="component" value="Mitochondrion"/>
</dbReference>
<dbReference type="GO" id="GO:0031966">
    <property type="term" value="C:mitochondrial membrane"/>
    <property type="evidence" value="ECO:0007669"/>
    <property type="project" value="UniProtKB-SubCell"/>
</dbReference>
<dbReference type="GO" id="GO:0008137">
    <property type="term" value="F:NADH dehydrogenase (ubiquinone) activity"/>
    <property type="evidence" value="ECO:0007669"/>
    <property type="project" value="UniProtKB-EC"/>
</dbReference>
<dbReference type="GO" id="GO:0048039">
    <property type="term" value="F:ubiquinone binding"/>
    <property type="evidence" value="ECO:0007669"/>
    <property type="project" value="TreeGrafter"/>
</dbReference>
<dbReference type="GO" id="GO:0042773">
    <property type="term" value="P:ATP synthesis coupled electron transport"/>
    <property type="evidence" value="ECO:0007669"/>
    <property type="project" value="InterPro"/>
</dbReference>
<dbReference type="GO" id="GO:0015990">
    <property type="term" value="P:electron transport coupled proton transport"/>
    <property type="evidence" value="ECO:0007669"/>
    <property type="project" value="TreeGrafter"/>
</dbReference>
<dbReference type="InterPro" id="IPR003918">
    <property type="entry name" value="NADH_UbQ_OxRdtase"/>
</dbReference>
<dbReference type="InterPro" id="IPR001750">
    <property type="entry name" value="ND/Mrp_TM"/>
</dbReference>
<dbReference type="PANTHER" id="PTHR43507">
    <property type="entry name" value="NADH-UBIQUINONE OXIDOREDUCTASE CHAIN 4"/>
    <property type="match status" value="1"/>
</dbReference>
<dbReference type="PANTHER" id="PTHR43507:SF20">
    <property type="entry name" value="NADH-UBIQUINONE OXIDOREDUCTASE CHAIN 4"/>
    <property type="match status" value="1"/>
</dbReference>
<dbReference type="Pfam" id="PF00361">
    <property type="entry name" value="Proton_antipo_M"/>
    <property type="match status" value="1"/>
</dbReference>
<dbReference type="PRINTS" id="PR01437">
    <property type="entry name" value="NUOXDRDTASE4"/>
</dbReference>
<geneLocation type="mitochondrion"/>
<sequence>SFSGATTLMIAHGLTSSMYFCLANSNYERTHNRTMLLSRGLQILLPLTAFWWLTASLTNLALPPTINLLGELFVITTSFSWSHITIVLTGLNMLITALYSLHMFITVQRGTLTHHMINMKPPFTRENMLMFMHLAPIILLSLNPNIILGFTS</sequence>
<name>NU4M_MACFA</name>
<feature type="chain" id="PRO_0000117951" description="NADH-ubiquinone oxidoreductase chain 4">
    <location>
        <begin position="1" status="less than"/>
        <end position="152"/>
    </location>
</feature>
<feature type="transmembrane region" description="Helical" evidence="2">
    <location>
        <begin position="2"/>
        <end position="22"/>
    </location>
</feature>
<feature type="transmembrane region" description="Helical" evidence="2">
    <location>
        <begin position="43"/>
        <end position="63"/>
    </location>
</feature>
<feature type="transmembrane region" description="Helical" evidence="2">
    <location>
        <begin position="84"/>
        <end position="104"/>
    </location>
</feature>
<feature type="transmembrane region" description="Helical" evidence="2">
    <location>
        <begin position="128"/>
        <end position="148"/>
    </location>
</feature>
<feature type="non-terminal residue">
    <location>
        <position position="1"/>
    </location>
</feature>
<protein>
    <recommendedName>
        <fullName>NADH-ubiquinone oxidoreductase chain 4</fullName>
        <ecNumber>7.1.1.2</ecNumber>
    </recommendedName>
    <alternativeName>
        <fullName>NADH dehydrogenase subunit 4</fullName>
    </alternativeName>
</protein>
<reference key="1">
    <citation type="journal article" date="1988" name="Mol. Biol. Evol.">
        <title>Molecular phylogeny and evolution of primate mitochondrial DNA.</title>
        <authorList>
            <person name="Hayasaka K."/>
            <person name="Gojobori T."/>
            <person name="Horai S."/>
        </authorList>
    </citation>
    <scope>NUCLEOTIDE SEQUENCE [GENOMIC DNA]</scope>
</reference>
<reference key="2">
    <citation type="journal article" date="1996" name="Mol. Biol. Evol.">
        <title>Molecular phylogeny of macaques: implications of nucleotide sequences from an 896-base pair region of mitochondrial DNA.</title>
        <authorList>
            <person name="Hayasaka K."/>
            <person name="Fujii K."/>
            <person name="Horai S."/>
        </authorList>
    </citation>
    <scope>NUCLEOTIDE SEQUENCE [GENOMIC DNA]</scope>
</reference>
<accession>P50664</accession>
<evidence type="ECO:0000250" key="1"/>
<evidence type="ECO:0000255" key="2"/>
<evidence type="ECO:0000305" key="3"/>